<geneLocation type="plasmid">
    <name>pSymA</name>
    <name>megaplasmid 1</name>
</geneLocation>
<feature type="chain" id="PRO_0000046327" description="Copper-transporting ATPase 1">
    <location>
        <begin position="1"/>
        <end position="826"/>
    </location>
</feature>
<feature type="transmembrane region" description="Helical" evidence="2">
    <location>
        <begin position="172"/>
        <end position="192"/>
    </location>
</feature>
<feature type="transmembrane region" description="Helical" evidence="2">
    <location>
        <begin position="209"/>
        <end position="229"/>
    </location>
</feature>
<feature type="transmembrane region" description="Helical" evidence="2">
    <location>
        <begin position="246"/>
        <end position="266"/>
    </location>
</feature>
<feature type="transmembrane region" description="Helical" evidence="2">
    <location>
        <begin position="270"/>
        <end position="290"/>
    </location>
</feature>
<feature type="transmembrane region" description="Helical" evidence="2">
    <location>
        <begin position="429"/>
        <end position="449"/>
    </location>
</feature>
<feature type="transmembrane region" description="Helical" evidence="2">
    <location>
        <begin position="457"/>
        <end position="477"/>
    </location>
</feature>
<feature type="transmembrane region" description="Helical" evidence="2">
    <location>
        <begin position="772"/>
        <end position="792"/>
    </location>
</feature>
<feature type="transmembrane region" description="Helical" evidence="2">
    <location>
        <begin position="795"/>
        <end position="815"/>
    </location>
</feature>
<feature type="domain" description="HMA 1" evidence="3">
    <location>
        <begin position="15"/>
        <end position="80"/>
    </location>
</feature>
<feature type="domain" description="HMA 2" evidence="3">
    <location>
        <begin position="82"/>
        <end position="147"/>
    </location>
</feature>
<feature type="active site" description="4-aspartylphosphate intermediate" evidence="1">
    <location>
        <position position="514"/>
    </location>
</feature>
<feature type="binding site" evidence="3">
    <location>
        <position position="26"/>
    </location>
    <ligand>
        <name>Cu cation</name>
        <dbReference type="ChEBI" id="CHEBI:23378"/>
        <label>1</label>
    </ligand>
</feature>
<feature type="binding site" evidence="3">
    <location>
        <position position="29"/>
    </location>
    <ligand>
        <name>Cu cation</name>
        <dbReference type="ChEBI" id="CHEBI:23378"/>
        <label>1</label>
    </ligand>
</feature>
<feature type="binding site" evidence="3">
    <location>
        <position position="93"/>
    </location>
    <ligand>
        <name>Cu cation</name>
        <dbReference type="ChEBI" id="CHEBI:23378"/>
        <label>2</label>
    </ligand>
</feature>
<feature type="binding site" evidence="3">
    <location>
        <position position="96"/>
    </location>
    <ligand>
        <name>Cu cation</name>
        <dbReference type="ChEBI" id="CHEBI:23378"/>
        <label>2</label>
    </ligand>
</feature>
<feature type="binding site">
    <location>
        <position position="713"/>
    </location>
    <ligand>
        <name>Mg(2+)</name>
        <dbReference type="ChEBI" id="CHEBI:18420"/>
    </ligand>
</feature>
<feature type="binding site">
    <location>
        <position position="717"/>
    </location>
    <ligand>
        <name>Mg(2+)</name>
        <dbReference type="ChEBI" id="CHEBI:18420"/>
    </ligand>
</feature>
<comment type="function">
    <text evidence="1">Involved in copper transport.</text>
</comment>
<comment type="catalytic activity">
    <reaction>
        <text>Cu(2+)(in) + ATP + H2O = Cu(2+)(out) + ADP + phosphate + H(+)</text>
        <dbReference type="Rhea" id="RHEA:10376"/>
        <dbReference type="ChEBI" id="CHEBI:15377"/>
        <dbReference type="ChEBI" id="CHEBI:15378"/>
        <dbReference type="ChEBI" id="CHEBI:29036"/>
        <dbReference type="ChEBI" id="CHEBI:30616"/>
        <dbReference type="ChEBI" id="CHEBI:43474"/>
        <dbReference type="ChEBI" id="CHEBI:456216"/>
        <dbReference type="EC" id="7.2.2.9"/>
    </reaction>
</comment>
<comment type="subcellular location">
    <subcellularLocation>
        <location evidence="1">Cell membrane</location>
        <topology evidence="1">Multi-pass membrane protein</topology>
    </subcellularLocation>
</comment>
<comment type="similarity">
    <text evidence="4">Belongs to the cation transport ATPase (P-type) (TC 3.A.3) family. Type IB subfamily.</text>
</comment>
<accession>P58341</accession>
<gene>
    <name type="primary">actP1</name>
    <name type="synonym">actP</name>
    <name type="ordered locus">RA0548</name>
    <name type="ORF">SMa1013</name>
</gene>
<reference key="1">
    <citation type="journal article" date="2001" name="Proc. Natl. Acad. Sci. U.S.A.">
        <title>Nucleotide sequence and predicted functions of the entire Sinorhizobium meliloti pSymA megaplasmid.</title>
        <authorList>
            <person name="Barnett M.J."/>
            <person name="Fisher R.F."/>
            <person name="Jones T."/>
            <person name="Komp C."/>
            <person name="Abola A.P."/>
            <person name="Barloy-Hubler F."/>
            <person name="Bowser L."/>
            <person name="Capela D."/>
            <person name="Galibert F."/>
            <person name="Gouzy J."/>
            <person name="Gurjal M."/>
            <person name="Hong A."/>
            <person name="Huizar L."/>
            <person name="Hyman R.W."/>
            <person name="Kahn D."/>
            <person name="Kahn M.L."/>
            <person name="Kalman S."/>
            <person name="Keating D.H."/>
            <person name="Palm C."/>
            <person name="Peck M.C."/>
            <person name="Surzycki R."/>
            <person name="Wells D.H."/>
            <person name="Yeh K.-C."/>
            <person name="Davis R.W."/>
            <person name="Federspiel N.A."/>
            <person name="Long S.R."/>
        </authorList>
    </citation>
    <scope>NUCLEOTIDE SEQUENCE [LARGE SCALE GENOMIC DNA]</scope>
    <source>
        <strain>1021</strain>
    </source>
</reference>
<reference key="2">
    <citation type="journal article" date="2001" name="Science">
        <title>The composite genome of the legume symbiont Sinorhizobium meliloti.</title>
        <authorList>
            <person name="Galibert F."/>
            <person name="Finan T.M."/>
            <person name="Long S.R."/>
            <person name="Puehler A."/>
            <person name="Abola P."/>
            <person name="Ampe F."/>
            <person name="Barloy-Hubler F."/>
            <person name="Barnett M.J."/>
            <person name="Becker A."/>
            <person name="Boistard P."/>
            <person name="Bothe G."/>
            <person name="Boutry M."/>
            <person name="Bowser L."/>
            <person name="Buhrmester J."/>
            <person name="Cadieu E."/>
            <person name="Capela D."/>
            <person name="Chain P."/>
            <person name="Cowie A."/>
            <person name="Davis R.W."/>
            <person name="Dreano S."/>
            <person name="Federspiel N.A."/>
            <person name="Fisher R.F."/>
            <person name="Gloux S."/>
            <person name="Godrie T."/>
            <person name="Goffeau A."/>
            <person name="Golding B."/>
            <person name="Gouzy J."/>
            <person name="Gurjal M."/>
            <person name="Hernandez-Lucas I."/>
            <person name="Hong A."/>
            <person name="Huizar L."/>
            <person name="Hyman R.W."/>
            <person name="Jones T."/>
            <person name="Kahn D."/>
            <person name="Kahn M.L."/>
            <person name="Kalman S."/>
            <person name="Keating D.H."/>
            <person name="Kiss E."/>
            <person name="Komp C."/>
            <person name="Lelaure V."/>
            <person name="Masuy D."/>
            <person name="Palm C."/>
            <person name="Peck M.C."/>
            <person name="Pohl T.M."/>
            <person name="Portetelle D."/>
            <person name="Purnelle B."/>
            <person name="Ramsperger U."/>
            <person name="Surzycki R."/>
            <person name="Thebault P."/>
            <person name="Vandenbol M."/>
            <person name="Vorhoelter F.J."/>
            <person name="Weidner S."/>
            <person name="Wells D.H."/>
            <person name="Wong K."/>
            <person name="Yeh K.-C."/>
            <person name="Batut J."/>
        </authorList>
    </citation>
    <scope>NUCLEOTIDE SEQUENCE [LARGE SCALE GENOMIC DNA]</scope>
    <source>
        <strain>1021</strain>
    </source>
</reference>
<proteinExistence type="inferred from homology"/>
<sequence>MTAFTQIEKSAAVPAPTDFGIEGMTCASCVRRVEKAISAVPGVASATVNLATERASVQFTGAPDTGGVLLAIEKAGYEPKVIIQEFGIEGMTCASCVSRVEKALRTVPGVADASVNLATEKGTVRFVSGVDVAAIEAAVRDAGYDVRKAKASGATAEPEDRRELETRTLKRLVILSAVLTLPLFLVEMGSHFMPGVHEWIMENIGMRHNLYIQFALATAVLFGPGLRFFRKGVPNLLRWTPDMNSLVVLGTTAAWGYSVVATFASGLLPSGTANVYYEAAAVIVTLILLGRYLEARAKGRTSQAIKRLLGLQPKTAFVAHGDEFVEIQISDVVVGDVIRIRPGEKIPVDGTVLDGNSYVDESMITGEPVPVQKAAGAEVVGGTINKNGSFTFRATKVGGDTLLAQIIKMVETAQGSKLPIQALVDKVTAWFVPAVILVAVLTFAAWYVFGPSPALTFALVNAVAVLIIACPCAMGLATPTSIMVGTGRAAELGILFRKGEALQSLREADVIALDKTGTLTKGRPELTDIVPADGFEADEVLSFVASLEALSEHPIAEAIVSAAKSRGIALVPATDFEATPGFGVRGAVSGLPVQVGADRAFSGVGIDVSPFVVEAERLGNSGKSPLYAAIDGRLAAIIAVSDPIKDTTPQAIKALHDLGLKVAMITGDNRRTADAIARQLGIDEVVAEVLPDGKVDAVKRLREGGRKVAFIGDGINDAPALTEADVGIAVGTGTDIAIESADVVLMSGDLIGVPKAIALSKATIRNIKQNLFWAFAYNVSLVPVAAGVLYPLNGTLLSPILAAAAMAMSSVFVLGNALRLRSVNPA</sequence>
<evidence type="ECO:0000250" key="1"/>
<evidence type="ECO:0000255" key="2"/>
<evidence type="ECO:0000255" key="3">
    <source>
        <dbReference type="PROSITE-ProRule" id="PRU00280"/>
    </source>
</evidence>
<evidence type="ECO:0000305" key="4"/>
<organism>
    <name type="scientific">Rhizobium meliloti (strain 1021)</name>
    <name type="common">Ensifer meliloti</name>
    <name type="synonym">Sinorhizobium meliloti</name>
    <dbReference type="NCBI Taxonomy" id="266834"/>
    <lineage>
        <taxon>Bacteria</taxon>
        <taxon>Pseudomonadati</taxon>
        <taxon>Pseudomonadota</taxon>
        <taxon>Alphaproteobacteria</taxon>
        <taxon>Hyphomicrobiales</taxon>
        <taxon>Rhizobiaceae</taxon>
        <taxon>Sinorhizobium/Ensifer group</taxon>
        <taxon>Sinorhizobium</taxon>
    </lineage>
</organism>
<protein>
    <recommendedName>
        <fullName>Copper-transporting ATPase 1</fullName>
        <ecNumber>7.2.2.9</ecNumber>
    </recommendedName>
</protein>
<keyword id="KW-0067">ATP-binding</keyword>
<keyword id="KW-1003">Cell membrane</keyword>
<keyword id="KW-0186">Copper</keyword>
<keyword id="KW-0187">Copper transport</keyword>
<keyword id="KW-0406">Ion transport</keyword>
<keyword id="KW-0460">Magnesium</keyword>
<keyword id="KW-0472">Membrane</keyword>
<keyword id="KW-0479">Metal-binding</keyword>
<keyword id="KW-0547">Nucleotide-binding</keyword>
<keyword id="KW-0597">Phosphoprotein</keyword>
<keyword id="KW-0614">Plasmid</keyword>
<keyword id="KW-1185">Reference proteome</keyword>
<keyword id="KW-0677">Repeat</keyword>
<keyword id="KW-1278">Translocase</keyword>
<keyword id="KW-0812">Transmembrane</keyword>
<keyword id="KW-1133">Transmembrane helix</keyword>
<keyword id="KW-0813">Transport</keyword>
<name>ATCU1_RHIME</name>
<dbReference type="EC" id="7.2.2.9"/>
<dbReference type="EMBL" id="AE006469">
    <property type="protein sequence ID" value="AAK65206.1"/>
    <property type="molecule type" value="Genomic_DNA"/>
</dbReference>
<dbReference type="PIR" id="D95330">
    <property type="entry name" value="D95330"/>
</dbReference>
<dbReference type="RefSeq" id="NP_435794.1">
    <property type="nucleotide sequence ID" value="NC_003037.1"/>
</dbReference>
<dbReference type="RefSeq" id="WP_010967529.1">
    <property type="nucleotide sequence ID" value="NC_003037.1"/>
</dbReference>
<dbReference type="SMR" id="P58341"/>
<dbReference type="EnsemblBacteria" id="AAK65206">
    <property type="protein sequence ID" value="AAK65206"/>
    <property type="gene ID" value="SMa1013"/>
</dbReference>
<dbReference type="KEGG" id="sme:SMa1013"/>
<dbReference type="PATRIC" id="fig|266834.11.peg.564"/>
<dbReference type="HOGENOM" id="CLU_001771_0_3_5"/>
<dbReference type="OrthoDB" id="9807843at2"/>
<dbReference type="Proteomes" id="UP000001976">
    <property type="component" value="Plasmid pSymA"/>
</dbReference>
<dbReference type="GO" id="GO:0005886">
    <property type="term" value="C:plasma membrane"/>
    <property type="evidence" value="ECO:0007669"/>
    <property type="project" value="UniProtKB-SubCell"/>
</dbReference>
<dbReference type="GO" id="GO:0005524">
    <property type="term" value="F:ATP binding"/>
    <property type="evidence" value="ECO:0007669"/>
    <property type="project" value="UniProtKB-KW"/>
</dbReference>
<dbReference type="GO" id="GO:0016887">
    <property type="term" value="F:ATP hydrolysis activity"/>
    <property type="evidence" value="ECO:0007669"/>
    <property type="project" value="InterPro"/>
</dbReference>
<dbReference type="GO" id="GO:0005507">
    <property type="term" value="F:copper ion binding"/>
    <property type="evidence" value="ECO:0007669"/>
    <property type="project" value="InterPro"/>
</dbReference>
<dbReference type="GO" id="GO:0043682">
    <property type="term" value="F:P-type divalent copper transporter activity"/>
    <property type="evidence" value="ECO:0007669"/>
    <property type="project" value="UniProtKB-EC"/>
</dbReference>
<dbReference type="GO" id="GO:0055070">
    <property type="term" value="P:copper ion homeostasis"/>
    <property type="evidence" value="ECO:0007669"/>
    <property type="project" value="TreeGrafter"/>
</dbReference>
<dbReference type="CDD" id="cd00371">
    <property type="entry name" value="HMA"/>
    <property type="match status" value="2"/>
</dbReference>
<dbReference type="CDD" id="cd02094">
    <property type="entry name" value="P-type_ATPase_Cu-like"/>
    <property type="match status" value="1"/>
</dbReference>
<dbReference type="FunFam" id="3.30.70.100:FF:000005">
    <property type="entry name" value="Copper-exporting P-type ATPase A"/>
    <property type="match status" value="2"/>
</dbReference>
<dbReference type="FunFam" id="2.70.150.10:FF:000002">
    <property type="entry name" value="Copper-transporting ATPase 1, putative"/>
    <property type="match status" value="1"/>
</dbReference>
<dbReference type="Gene3D" id="3.30.70.100">
    <property type="match status" value="2"/>
</dbReference>
<dbReference type="Gene3D" id="3.40.1110.10">
    <property type="entry name" value="Calcium-transporting ATPase, cytoplasmic domain N"/>
    <property type="match status" value="1"/>
</dbReference>
<dbReference type="Gene3D" id="2.70.150.10">
    <property type="entry name" value="Calcium-transporting ATPase, cytoplasmic transduction domain A"/>
    <property type="match status" value="1"/>
</dbReference>
<dbReference type="Gene3D" id="3.40.50.1000">
    <property type="entry name" value="HAD superfamily/HAD-like"/>
    <property type="match status" value="1"/>
</dbReference>
<dbReference type="InterPro" id="IPR023299">
    <property type="entry name" value="ATPase_P-typ_cyto_dom_N"/>
</dbReference>
<dbReference type="InterPro" id="IPR018303">
    <property type="entry name" value="ATPase_P-typ_P_site"/>
</dbReference>
<dbReference type="InterPro" id="IPR023298">
    <property type="entry name" value="ATPase_P-typ_TM_dom_sf"/>
</dbReference>
<dbReference type="InterPro" id="IPR008250">
    <property type="entry name" value="ATPase_P-typ_transduc_dom_A_sf"/>
</dbReference>
<dbReference type="InterPro" id="IPR036412">
    <property type="entry name" value="HAD-like_sf"/>
</dbReference>
<dbReference type="InterPro" id="IPR023214">
    <property type="entry name" value="HAD_sf"/>
</dbReference>
<dbReference type="InterPro" id="IPR017969">
    <property type="entry name" value="Heavy-metal-associated_CS"/>
</dbReference>
<dbReference type="InterPro" id="IPR006122">
    <property type="entry name" value="HMA_Cu_ion-bd"/>
</dbReference>
<dbReference type="InterPro" id="IPR006121">
    <property type="entry name" value="HMA_dom"/>
</dbReference>
<dbReference type="InterPro" id="IPR036163">
    <property type="entry name" value="HMA_dom_sf"/>
</dbReference>
<dbReference type="InterPro" id="IPR027256">
    <property type="entry name" value="P-typ_ATPase_IB"/>
</dbReference>
<dbReference type="InterPro" id="IPR001757">
    <property type="entry name" value="P_typ_ATPase"/>
</dbReference>
<dbReference type="InterPro" id="IPR044492">
    <property type="entry name" value="P_typ_ATPase_HD_dom"/>
</dbReference>
<dbReference type="NCBIfam" id="TIGR01511">
    <property type="entry name" value="ATPase-IB1_Cu"/>
    <property type="match status" value="1"/>
</dbReference>
<dbReference type="NCBIfam" id="TIGR01525">
    <property type="entry name" value="ATPase-IB_hvy"/>
    <property type="match status" value="1"/>
</dbReference>
<dbReference type="NCBIfam" id="TIGR01494">
    <property type="entry name" value="ATPase_P-type"/>
    <property type="match status" value="1"/>
</dbReference>
<dbReference type="NCBIfam" id="TIGR00003">
    <property type="entry name" value="copper ion binding protein"/>
    <property type="match status" value="2"/>
</dbReference>
<dbReference type="PANTHER" id="PTHR43520">
    <property type="entry name" value="ATP7, ISOFORM B"/>
    <property type="match status" value="1"/>
</dbReference>
<dbReference type="PANTHER" id="PTHR43520:SF8">
    <property type="entry name" value="P-TYPE CU(+) TRANSPORTER"/>
    <property type="match status" value="1"/>
</dbReference>
<dbReference type="Pfam" id="PF00122">
    <property type="entry name" value="E1-E2_ATPase"/>
    <property type="match status" value="1"/>
</dbReference>
<dbReference type="Pfam" id="PF00403">
    <property type="entry name" value="HMA"/>
    <property type="match status" value="2"/>
</dbReference>
<dbReference type="Pfam" id="PF00702">
    <property type="entry name" value="Hydrolase"/>
    <property type="match status" value="1"/>
</dbReference>
<dbReference type="PRINTS" id="PR00119">
    <property type="entry name" value="CATATPASE"/>
</dbReference>
<dbReference type="PRINTS" id="PR00120">
    <property type="entry name" value="HATPASE"/>
</dbReference>
<dbReference type="SFLD" id="SFLDG00002">
    <property type="entry name" value="C1.7:_P-type_atpase_like"/>
    <property type="match status" value="1"/>
</dbReference>
<dbReference type="SFLD" id="SFLDF00027">
    <property type="entry name" value="p-type_atpase"/>
    <property type="match status" value="1"/>
</dbReference>
<dbReference type="SUPFAM" id="SSF81653">
    <property type="entry name" value="Calcium ATPase, transduction domain A"/>
    <property type="match status" value="1"/>
</dbReference>
<dbReference type="SUPFAM" id="SSF81665">
    <property type="entry name" value="Calcium ATPase, transmembrane domain M"/>
    <property type="match status" value="1"/>
</dbReference>
<dbReference type="SUPFAM" id="SSF56784">
    <property type="entry name" value="HAD-like"/>
    <property type="match status" value="1"/>
</dbReference>
<dbReference type="SUPFAM" id="SSF55008">
    <property type="entry name" value="HMA, heavy metal-associated domain"/>
    <property type="match status" value="2"/>
</dbReference>
<dbReference type="PROSITE" id="PS00154">
    <property type="entry name" value="ATPASE_E1_E2"/>
    <property type="match status" value="1"/>
</dbReference>
<dbReference type="PROSITE" id="PS01047">
    <property type="entry name" value="HMA_1"/>
    <property type="match status" value="2"/>
</dbReference>
<dbReference type="PROSITE" id="PS50846">
    <property type="entry name" value="HMA_2"/>
    <property type="match status" value="2"/>
</dbReference>